<dbReference type="EC" id="7.1.2.2" evidence="1"/>
<dbReference type="EMBL" id="CP000155">
    <property type="protein sequence ID" value="ABC27807.1"/>
    <property type="molecule type" value="Genomic_DNA"/>
</dbReference>
<dbReference type="SMR" id="Q2SNG7"/>
<dbReference type="STRING" id="349521.HCH_00917"/>
<dbReference type="KEGG" id="hch:HCH_00917"/>
<dbReference type="eggNOG" id="COG0056">
    <property type="taxonomic scope" value="Bacteria"/>
</dbReference>
<dbReference type="HOGENOM" id="CLU_010091_2_1_6"/>
<dbReference type="OrthoDB" id="9801639at2"/>
<dbReference type="Proteomes" id="UP000000238">
    <property type="component" value="Chromosome"/>
</dbReference>
<dbReference type="GO" id="GO:0005886">
    <property type="term" value="C:plasma membrane"/>
    <property type="evidence" value="ECO:0007669"/>
    <property type="project" value="UniProtKB-SubCell"/>
</dbReference>
<dbReference type="GO" id="GO:0045259">
    <property type="term" value="C:proton-transporting ATP synthase complex"/>
    <property type="evidence" value="ECO:0007669"/>
    <property type="project" value="UniProtKB-KW"/>
</dbReference>
<dbReference type="GO" id="GO:0043531">
    <property type="term" value="F:ADP binding"/>
    <property type="evidence" value="ECO:0007669"/>
    <property type="project" value="TreeGrafter"/>
</dbReference>
<dbReference type="GO" id="GO:0005524">
    <property type="term" value="F:ATP binding"/>
    <property type="evidence" value="ECO:0007669"/>
    <property type="project" value="UniProtKB-UniRule"/>
</dbReference>
<dbReference type="GO" id="GO:0046933">
    <property type="term" value="F:proton-transporting ATP synthase activity, rotational mechanism"/>
    <property type="evidence" value="ECO:0007669"/>
    <property type="project" value="UniProtKB-UniRule"/>
</dbReference>
<dbReference type="CDD" id="cd18116">
    <property type="entry name" value="ATP-synt_F1_alpha_N"/>
    <property type="match status" value="1"/>
</dbReference>
<dbReference type="CDD" id="cd01132">
    <property type="entry name" value="F1-ATPase_alpha_CD"/>
    <property type="match status" value="1"/>
</dbReference>
<dbReference type="FunFam" id="3.40.50.300:FF:004039">
    <property type="entry name" value="ATP synthase subunit alpha, mitochondrial"/>
    <property type="match status" value="1"/>
</dbReference>
<dbReference type="Gene3D" id="2.40.30.20">
    <property type="match status" value="1"/>
</dbReference>
<dbReference type="Gene3D" id="1.20.150.20">
    <property type="entry name" value="ATP synthase alpha/beta chain, C-terminal domain"/>
    <property type="match status" value="1"/>
</dbReference>
<dbReference type="Gene3D" id="3.40.50.300">
    <property type="entry name" value="P-loop containing nucleotide triphosphate hydrolases"/>
    <property type="match status" value="1"/>
</dbReference>
<dbReference type="HAMAP" id="MF_01346">
    <property type="entry name" value="ATP_synth_alpha_bact"/>
    <property type="match status" value="1"/>
</dbReference>
<dbReference type="InterPro" id="IPR023366">
    <property type="entry name" value="ATP_synth_asu-like_sf"/>
</dbReference>
<dbReference type="InterPro" id="IPR000793">
    <property type="entry name" value="ATP_synth_asu_C"/>
</dbReference>
<dbReference type="InterPro" id="IPR038376">
    <property type="entry name" value="ATP_synth_asu_C_sf"/>
</dbReference>
<dbReference type="InterPro" id="IPR033732">
    <property type="entry name" value="ATP_synth_F1_a_nt-bd_dom"/>
</dbReference>
<dbReference type="InterPro" id="IPR005294">
    <property type="entry name" value="ATP_synth_F1_asu"/>
</dbReference>
<dbReference type="InterPro" id="IPR020003">
    <property type="entry name" value="ATPase_a/bsu_AS"/>
</dbReference>
<dbReference type="InterPro" id="IPR004100">
    <property type="entry name" value="ATPase_F1/V1/A1_a/bsu_N"/>
</dbReference>
<dbReference type="InterPro" id="IPR036121">
    <property type="entry name" value="ATPase_F1/V1/A1_a/bsu_N_sf"/>
</dbReference>
<dbReference type="InterPro" id="IPR000194">
    <property type="entry name" value="ATPase_F1/V1/A1_a/bsu_nucl-bd"/>
</dbReference>
<dbReference type="InterPro" id="IPR027417">
    <property type="entry name" value="P-loop_NTPase"/>
</dbReference>
<dbReference type="NCBIfam" id="TIGR00962">
    <property type="entry name" value="atpA"/>
    <property type="match status" value="1"/>
</dbReference>
<dbReference type="NCBIfam" id="NF009884">
    <property type="entry name" value="PRK13343.1"/>
    <property type="match status" value="1"/>
</dbReference>
<dbReference type="PANTHER" id="PTHR48082">
    <property type="entry name" value="ATP SYNTHASE SUBUNIT ALPHA, MITOCHONDRIAL"/>
    <property type="match status" value="1"/>
</dbReference>
<dbReference type="PANTHER" id="PTHR48082:SF2">
    <property type="entry name" value="ATP SYNTHASE SUBUNIT ALPHA, MITOCHONDRIAL"/>
    <property type="match status" value="1"/>
</dbReference>
<dbReference type="Pfam" id="PF00006">
    <property type="entry name" value="ATP-synt_ab"/>
    <property type="match status" value="1"/>
</dbReference>
<dbReference type="Pfam" id="PF00306">
    <property type="entry name" value="ATP-synt_ab_C"/>
    <property type="match status" value="1"/>
</dbReference>
<dbReference type="Pfam" id="PF02874">
    <property type="entry name" value="ATP-synt_ab_N"/>
    <property type="match status" value="1"/>
</dbReference>
<dbReference type="SUPFAM" id="SSF47917">
    <property type="entry name" value="C-terminal domain of alpha and beta subunits of F1 ATP synthase"/>
    <property type="match status" value="1"/>
</dbReference>
<dbReference type="SUPFAM" id="SSF50615">
    <property type="entry name" value="N-terminal domain of alpha and beta subunits of F1 ATP synthase"/>
    <property type="match status" value="1"/>
</dbReference>
<dbReference type="SUPFAM" id="SSF52540">
    <property type="entry name" value="P-loop containing nucleoside triphosphate hydrolases"/>
    <property type="match status" value="1"/>
</dbReference>
<dbReference type="PROSITE" id="PS00152">
    <property type="entry name" value="ATPASE_ALPHA_BETA"/>
    <property type="match status" value="1"/>
</dbReference>
<gene>
    <name evidence="1" type="primary">atpA1</name>
    <name type="ordered locus">HCH_00917</name>
</gene>
<reference key="1">
    <citation type="journal article" date="2005" name="Nucleic Acids Res.">
        <title>Genomic blueprint of Hahella chejuensis, a marine microbe producing an algicidal agent.</title>
        <authorList>
            <person name="Jeong H."/>
            <person name="Yim J.H."/>
            <person name="Lee C."/>
            <person name="Choi S.-H."/>
            <person name="Park Y.K."/>
            <person name="Yoon S.H."/>
            <person name="Hur C.-G."/>
            <person name="Kang H.-Y."/>
            <person name="Kim D."/>
            <person name="Lee H.H."/>
            <person name="Park K.H."/>
            <person name="Park S.-H."/>
            <person name="Park H.-S."/>
            <person name="Lee H.K."/>
            <person name="Oh T.K."/>
            <person name="Kim J.F."/>
        </authorList>
    </citation>
    <scope>NUCLEOTIDE SEQUENCE [LARGE SCALE GENOMIC DNA]</scope>
    <source>
        <strain>KCTC 2396</strain>
    </source>
</reference>
<protein>
    <recommendedName>
        <fullName evidence="1">ATP synthase subunit alpha 1</fullName>
        <ecNumber evidence="1">7.1.2.2</ecNumber>
    </recommendedName>
    <alternativeName>
        <fullName evidence="1">ATP synthase F1 sector subunit alpha 1</fullName>
    </alternativeName>
    <alternativeName>
        <fullName evidence="1">F-ATPase subunit alpha 1</fullName>
    </alternativeName>
</protein>
<comment type="function">
    <text evidence="1">Produces ATP from ADP in the presence of a proton gradient across the membrane. The alpha chain is a regulatory subunit.</text>
</comment>
<comment type="catalytic activity">
    <reaction evidence="1">
        <text>ATP + H2O + 4 H(+)(in) = ADP + phosphate + 5 H(+)(out)</text>
        <dbReference type="Rhea" id="RHEA:57720"/>
        <dbReference type="ChEBI" id="CHEBI:15377"/>
        <dbReference type="ChEBI" id="CHEBI:15378"/>
        <dbReference type="ChEBI" id="CHEBI:30616"/>
        <dbReference type="ChEBI" id="CHEBI:43474"/>
        <dbReference type="ChEBI" id="CHEBI:456216"/>
        <dbReference type="EC" id="7.1.2.2"/>
    </reaction>
</comment>
<comment type="subunit">
    <text evidence="1">F-type ATPases have 2 components, CF(1) - the catalytic core - and CF(0) - the membrane proton channel. CF(1) has five subunits: alpha(3), beta(3), gamma(1), delta(1), epsilon(1). CF(0) has three main subunits: a(1), b(2) and c(9-12). The alpha and beta chains form an alternating ring which encloses part of the gamma chain. CF(1) is attached to CF(0) by a central stalk formed by the gamma and epsilon chains, while a peripheral stalk is formed by the delta and b chains.</text>
</comment>
<comment type="subcellular location">
    <subcellularLocation>
        <location evidence="1">Cell inner membrane</location>
        <topology evidence="1">Peripheral membrane protein</topology>
    </subcellularLocation>
</comment>
<comment type="similarity">
    <text evidence="1">Belongs to the ATPase alpha/beta chains family.</text>
</comment>
<evidence type="ECO:0000255" key="1">
    <source>
        <dbReference type="HAMAP-Rule" id="MF_01346"/>
    </source>
</evidence>
<accession>Q2SNG7</accession>
<name>ATPA1_HAHCH</name>
<keyword id="KW-0066">ATP synthesis</keyword>
<keyword id="KW-0067">ATP-binding</keyword>
<keyword id="KW-0997">Cell inner membrane</keyword>
<keyword id="KW-1003">Cell membrane</keyword>
<keyword id="KW-0139">CF(1)</keyword>
<keyword id="KW-0375">Hydrogen ion transport</keyword>
<keyword id="KW-0406">Ion transport</keyword>
<keyword id="KW-0472">Membrane</keyword>
<keyword id="KW-0547">Nucleotide-binding</keyword>
<keyword id="KW-1185">Reference proteome</keyword>
<keyword id="KW-1278">Translocase</keyword>
<keyword id="KW-0813">Transport</keyword>
<proteinExistence type="inferred from homology"/>
<feature type="chain" id="PRO_0000238261" description="ATP synthase subunit alpha 1">
    <location>
        <begin position="1"/>
        <end position="494"/>
    </location>
</feature>
<feature type="site" description="Required for activity" evidence="1">
    <location>
        <position position="366"/>
    </location>
</feature>
<organism>
    <name type="scientific">Hahella chejuensis (strain KCTC 2396)</name>
    <dbReference type="NCBI Taxonomy" id="349521"/>
    <lineage>
        <taxon>Bacteria</taxon>
        <taxon>Pseudomonadati</taxon>
        <taxon>Pseudomonadota</taxon>
        <taxon>Gammaproteobacteria</taxon>
        <taxon>Oceanospirillales</taxon>
        <taxon>Hahellaceae</taxon>
        <taxon>Hahella</taxon>
    </lineage>
</organism>
<sequence>MQDHASSKDDRALQRTRHWISGYSPDVRIQERGVLVSVGDGVAWIKGLPSARMEELLDFEDGSLGMVFDLCEELVGAVILQQTGSLTAGQEVHRTRRPLGLLAHDSLLGRVIDPTGRPLDGQSPLHEGAWVNLNSPTPAIVERDFVHEPLYTGIRMIDAMIPIGRGQRQLIIGDEGLGRTSIALNAVLHQKDKDVRCIYVLIGQKRGAAVNVMQTLQRHGADAYTTLVVADAGSPPGLQYLAPFAGSALASHWMRQGRHVLMVYDDLSSHARSYRELSLLLRRPPGREAYPGDVFSVHARLLEQATCLSPEQGGGSLTALPIAETQQGEIAAYIPTNLISITDGQIYLERSLFAAGVRPAIDVGRSVSRIGGKAQHPAIKHEAIRMKLDYSRFLELEIFTRFGAKLDPGMQTVIKRGQLLRELLKQDRFERFSPEQELAWMIAYNEGLLDEHPLTDIPAALLQIQSRLDARLSLETPREDWTAALQKMLTTADV</sequence>